<feature type="chain" id="PRO_1000123323" description="Probable endonuclease 4">
    <location>
        <begin position="1"/>
        <end position="285"/>
    </location>
</feature>
<feature type="binding site" evidence="1">
    <location>
        <position position="67"/>
    </location>
    <ligand>
        <name>Zn(2+)</name>
        <dbReference type="ChEBI" id="CHEBI:29105"/>
        <label>1</label>
    </ligand>
</feature>
<feature type="binding site" evidence="1">
    <location>
        <position position="107"/>
    </location>
    <ligand>
        <name>Zn(2+)</name>
        <dbReference type="ChEBI" id="CHEBI:29105"/>
        <label>1</label>
    </ligand>
</feature>
<feature type="binding site" evidence="1">
    <location>
        <position position="144"/>
    </location>
    <ligand>
        <name>Zn(2+)</name>
        <dbReference type="ChEBI" id="CHEBI:29105"/>
        <label>1</label>
    </ligand>
</feature>
<feature type="binding site" evidence="1">
    <location>
        <position position="144"/>
    </location>
    <ligand>
        <name>Zn(2+)</name>
        <dbReference type="ChEBI" id="CHEBI:29105"/>
        <label>2</label>
    </ligand>
</feature>
<feature type="binding site" evidence="1">
    <location>
        <position position="178"/>
    </location>
    <ligand>
        <name>Zn(2+)</name>
        <dbReference type="ChEBI" id="CHEBI:29105"/>
        <label>2</label>
    </ligand>
</feature>
<feature type="binding site" evidence="1">
    <location>
        <position position="181"/>
    </location>
    <ligand>
        <name>Zn(2+)</name>
        <dbReference type="ChEBI" id="CHEBI:29105"/>
        <label>3</label>
    </ligand>
</feature>
<feature type="binding site" evidence="1">
    <location>
        <position position="215"/>
    </location>
    <ligand>
        <name>Zn(2+)</name>
        <dbReference type="ChEBI" id="CHEBI:29105"/>
        <label>2</label>
    </ligand>
</feature>
<feature type="binding site" evidence="1">
    <location>
        <position position="228"/>
    </location>
    <ligand>
        <name>Zn(2+)</name>
        <dbReference type="ChEBI" id="CHEBI:29105"/>
        <label>3</label>
    </ligand>
</feature>
<feature type="binding site" evidence="1">
    <location>
        <position position="230"/>
    </location>
    <ligand>
        <name>Zn(2+)</name>
        <dbReference type="ChEBI" id="CHEBI:29105"/>
        <label>3</label>
    </ligand>
</feature>
<feature type="binding site" evidence="1">
    <location>
        <position position="260"/>
    </location>
    <ligand>
        <name>Zn(2+)</name>
        <dbReference type="ChEBI" id="CHEBI:29105"/>
        <label>2</label>
    </ligand>
</feature>
<organism>
    <name type="scientific">Chloroflexus aurantiacus (strain ATCC 29364 / DSM 637 / Y-400-fl)</name>
    <dbReference type="NCBI Taxonomy" id="480224"/>
    <lineage>
        <taxon>Bacteria</taxon>
        <taxon>Bacillati</taxon>
        <taxon>Chloroflexota</taxon>
        <taxon>Chloroflexia</taxon>
        <taxon>Chloroflexales</taxon>
        <taxon>Chloroflexineae</taxon>
        <taxon>Chloroflexaceae</taxon>
        <taxon>Chloroflexus</taxon>
    </lineage>
</organism>
<comment type="function">
    <text evidence="1">Endonuclease IV plays a role in DNA repair. It cleaves phosphodiester bonds at apurinic or apyrimidinic (AP) sites, generating a 3'-hydroxyl group and a 5'-terminal sugar phosphate.</text>
</comment>
<comment type="catalytic activity">
    <reaction evidence="1">
        <text>Endonucleolytic cleavage to 5'-phosphooligonucleotide end-products.</text>
        <dbReference type="EC" id="3.1.21.2"/>
    </reaction>
</comment>
<comment type="cofactor">
    <cofactor evidence="1">
        <name>Zn(2+)</name>
        <dbReference type="ChEBI" id="CHEBI:29105"/>
    </cofactor>
    <text evidence="1">Binds 3 Zn(2+) ions.</text>
</comment>
<comment type="similarity">
    <text evidence="1">Belongs to the AP endonuclease 2 family.</text>
</comment>
<protein>
    <recommendedName>
        <fullName evidence="1">Probable endonuclease 4</fullName>
        <ecNumber evidence="1">3.1.21.2</ecNumber>
    </recommendedName>
    <alternativeName>
        <fullName evidence="1">Endodeoxyribonuclease IV</fullName>
    </alternativeName>
    <alternativeName>
        <fullName evidence="1">Endonuclease IV</fullName>
    </alternativeName>
</protein>
<dbReference type="EC" id="3.1.21.2" evidence="1"/>
<dbReference type="EMBL" id="CP001364">
    <property type="protein sequence ID" value="ACM52575.1"/>
    <property type="molecule type" value="Genomic_DNA"/>
</dbReference>
<dbReference type="SMR" id="B9LAM9"/>
<dbReference type="KEGG" id="chl:Chy400_1154"/>
<dbReference type="HOGENOM" id="CLU_025885_0_1_0"/>
<dbReference type="OrthoDB" id="9805666at2"/>
<dbReference type="GO" id="GO:0008833">
    <property type="term" value="F:deoxyribonuclease IV (phage-T4-induced) activity"/>
    <property type="evidence" value="ECO:0007669"/>
    <property type="project" value="UniProtKB-UniRule"/>
</dbReference>
<dbReference type="GO" id="GO:0003677">
    <property type="term" value="F:DNA binding"/>
    <property type="evidence" value="ECO:0007669"/>
    <property type="project" value="InterPro"/>
</dbReference>
<dbReference type="GO" id="GO:0003906">
    <property type="term" value="F:DNA-(apurinic or apyrimidinic site) endonuclease activity"/>
    <property type="evidence" value="ECO:0007669"/>
    <property type="project" value="TreeGrafter"/>
</dbReference>
<dbReference type="GO" id="GO:0008081">
    <property type="term" value="F:phosphoric diester hydrolase activity"/>
    <property type="evidence" value="ECO:0007669"/>
    <property type="project" value="TreeGrafter"/>
</dbReference>
<dbReference type="GO" id="GO:0008270">
    <property type="term" value="F:zinc ion binding"/>
    <property type="evidence" value="ECO:0007669"/>
    <property type="project" value="UniProtKB-UniRule"/>
</dbReference>
<dbReference type="GO" id="GO:0006284">
    <property type="term" value="P:base-excision repair"/>
    <property type="evidence" value="ECO:0007669"/>
    <property type="project" value="TreeGrafter"/>
</dbReference>
<dbReference type="CDD" id="cd00019">
    <property type="entry name" value="AP2Ec"/>
    <property type="match status" value="1"/>
</dbReference>
<dbReference type="FunFam" id="3.20.20.150:FF:000001">
    <property type="entry name" value="Probable endonuclease 4"/>
    <property type="match status" value="1"/>
</dbReference>
<dbReference type="Gene3D" id="3.20.20.150">
    <property type="entry name" value="Divalent-metal-dependent TIM barrel enzymes"/>
    <property type="match status" value="1"/>
</dbReference>
<dbReference type="HAMAP" id="MF_00152">
    <property type="entry name" value="Nfo"/>
    <property type="match status" value="1"/>
</dbReference>
<dbReference type="InterPro" id="IPR001719">
    <property type="entry name" value="AP_endonuc_2"/>
</dbReference>
<dbReference type="InterPro" id="IPR018246">
    <property type="entry name" value="AP_endonuc_F2_Zn_BS"/>
</dbReference>
<dbReference type="InterPro" id="IPR036237">
    <property type="entry name" value="Xyl_isomerase-like_sf"/>
</dbReference>
<dbReference type="InterPro" id="IPR013022">
    <property type="entry name" value="Xyl_isomerase-like_TIM-brl"/>
</dbReference>
<dbReference type="NCBIfam" id="TIGR00587">
    <property type="entry name" value="nfo"/>
    <property type="match status" value="1"/>
</dbReference>
<dbReference type="PANTHER" id="PTHR21445:SF0">
    <property type="entry name" value="APURINIC-APYRIMIDINIC ENDONUCLEASE"/>
    <property type="match status" value="1"/>
</dbReference>
<dbReference type="PANTHER" id="PTHR21445">
    <property type="entry name" value="ENDONUCLEASE IV ENDODEOXYRIBONUCLEASE IV"/>
    <property type="match status" value="1"/>
</dbReference>
<dbReference type="Pfam" id="PF01261">
    <property type="entry name" value="AP_endonuc_2"/>
    <property type="match status" value="1"/>
</dbReference>
<dbReference type="SMART" id="SM00518">
    <property type="entry name" value="AP2Ec"/>
    <property type="match status" value="1"/>
</dbReference>
<dbReference type="SUPFAM" id="SSF51658">
    <property type="entry name" value="Xylose isomerase-like"/>
    <property type="match status" value="1"/>
</dbReference>
<dbReference type="PROSITE" id="PS00729">
    <property type="entry name" value="AP_NUCLEASE_F2_1"/>
    <property type="match status" value="1"/>
</dbReference>
<dbReference type="PROSITE" id="PS00730">
    <property type="entry name" value="AP_NUCLEASE_F2_2"/>
    <property type="match status" value="1"/>
</dbReference>
<dbReference type="PROSITE" id="PS00731">
    <property type="entry name" value="AP_NUCLEASE_F2_3"/>
    <property type="match status" value="1"/>
</dbReference>
<dbReference type="PROSITE" id="PS51432">
    <property type="entry name" value="AP_NUCLEASE_F2_4"/>
    <property type="match status" value="1"/>
</dbReference>
<proteinExistence type="inferred from homology"/>
<evidence type="ECO:0000255" key="1">
    <source>
        <dbReference type="HAMAP-Rule" id="MF_00152"/>
    </source>
</evidence>
<gene>
    <name evidence="1" type="primary">nfo</name>
    <name type="ordered locus">Chy400_1154</name>
</gene>
<name>END4_CHLSY</name>
<accession>B9LAM9</accession>
<sequence>MPRFGAHMSISGGVSKSFARGESVGLDSMQIFAKNERQWTAKPISPEEATAFRTEQQRTGIHPVVVHDSYLINLAAPADELREKSIAAFADELERCAQLDIPYLVTHPGAHTGIGEEAGLARVADAICRLLAEGVGGNTMILLETTAGQGTALGYRFEHLARLFELIPYHERLGICVDTCHIFAAGYDIRDPEGYQTTFAELDRLVGLTRVKCFHLNDSQKDLGSRVDRHAHIGQGCIGVEAFRMLVNDPRFADLPMIIETPKGEDMAEDRMNLALLRSLVQGAE</sequence>
<keyword id="KW-0227">DNA damage</keyword>
<keyword id="KW-0234">DNA repair</keyword>
<keyword id="KW-0255">Endonuclease</keyword>
<keyword id="KW-0378">Hydrolase</keyword>
<keyword id="KW-0479">Metal-binding</keyword>
<keyword id="KW-0540">Nuclease</keyword>
<keyword id="KW-0862">Zinc</keyword>
<reference key="1">
    <citation type="submission" date="2009-01" db="EMBL/GenBank/DDBJ databases">
        <title>Complete sequence of Chloroflexus sp. Y-400-fl.</title>
        <authorList>
            <consortium name="US DOE Joint Genome Institute"/>
            <person name="Lucas S."/>
            <person name="Copeland A."/>
            <person name="Lapidus A."/>
            <person name="Glavina del Rio T."/>
            <person name="Dalin E."/>
            <person name="Tice H."/>
            <person name="Bruce D."/>
            <person name="Goodwin L."/>
            <person name="Pitluck S."/>
            <person name="Sims D."/>
            <person name="Kiss H."/>
            <person name="Brettin T."/>
            <person name="Detter J.C."/>
            <person name="Han C."/>
            <person name="Larimer F."/>
            <person name="Land M."/>
            <person name="Hauser L."/>
            <person name="Kyrpides N."/>
            <person name="Ovchinnikova G."/>
            <person name="Bryant D.A."/>
            <person name="Richardson P."/>
        </authorList>
    </citation>
    <scope>NUCLEOTIDE SEQUENCE [LARGE SCALE GENOMIC DNA]</scope>
    <source>
        <strain>ATCC 29364 / DSM 637 / Y-400-fl</strain>
    </source>
</reference>